<feature type="chain" id="PRO_0000132828" description="Late expression factor 5 homolog">
    <location>
        <begin position="1"/>
        <end position="240"/>
    </location>
</feature>
<proteinExistence type="inferred from homology"/>
<protein>
    <recommendedName>
        <fullName>Late expression factor 5 homolog</fullName>
    </recommendedName>
</protein>
<dbReference type="EMBL" id="AY229987">
    <property type="protein sequence ID" value="AAQ21673.1"/>
    <property type="molecule type" value="Genomic_DNA"/>
</dbReference>
<dbReference type="RefSeq" id="NP_891925.1">
    <property type="nucleotide sequence ID" value="NC_005068.1"/>
</dbReference>
<dbReference type="GeneID" id="1725081"/>
<dbReference type="KEGG" id="vg:1725081"/>
<dbReference type="OrthoDB" id="12882at10239"/>
<dbReference type="Proteomes" id="UP000203359">
    <property type="component" value="Genome"/>
</dbReference>
<dbReference type="GO" id="GO:0006355">
    <property type="term" value="P:regulation of DNA-templated transcription"/>
    <property type="evidence" value="ECO:0007669"/>
    <property type="project" value="InterPro"/>
</dbReference>
<dbReference type="InterPro" id="IPR021758">
    <property type="entry name" value="Baculo_LEF5_C"/>
</dbReference>
<dbReference type="InterPro" id="IPR006923">
    <property type="entry name" value="Baculo_LEF5_N"/>
</dbReference>
<dbReference type="Pfam" id="PF04838">
    <property type="entry name" value="Baculo_LEF5"/>
    <property type="match status" value="1"/>
</dbReference>
<dbReference type="Pfam" id="PF11792">
    <property type="entry name" value="Baculo_LEF5_C"/>
    <property type="match status" value="1"/>
</dbReference>
<reference key="1">
    <citation type="journal article" date="1994" name="J. Gen. Virol.">
        <title>Genome organization of the DNA-binding protein gene region of Cryptophlebia leucotreta granulosis virus is closely related to that of nuclear polyhedrosis viruses.</title>
        <authorList>
            <person name="Jehle J.A."/>
            <person name="Backhaus H."/>
        </authorList>
    </citation>
    <scope>NUCLEOTIDE SEQUENCE [GENOMIC DNA]</scope>
</reference>
<reference key="2">
    <citation type="journal article" date="2003" name="Virology">
        <title>The genome of the Cryptophlebia leucotreta granulovirus.</title>
        <authorList>
            <person name="Lange M."/>
            <person name="Jehle J.A."/>
        </authorList>
    </citation>
    <scope>NUCLEOTIDE SEQUENCE [LARGE SCALE GENOMIC DNA]</scope>
    <source>
        <strain>CV3</strain>
    </source>
</reference>
<accession>P41727</accession>
<name>LEF5_GVCL</name>
<evidence type="ECO:0000250" key="1"/>
<evidence type="ECO:0000305" key="2"/>
<organismHost>
    <name type="scientific">Tortricidae</name>
    <dbReference type="NCBI Taxonomy" id="7139"/>
</organismHost>
<organism>
    <name type="scientific">Cryptophlebia leucotreta granulosis virus</name>
    <name type="common">ClGV</name>
    <name type="synonym">Cryptophlebia leucotreta granulovirus</name>
    <dbReference type="NCBI Taxonomy" id="35254"/>
    <lineage>
        <taxon>Viruses</taxon>
        <taxon>Viruses incertae sedis</taxon>
        <taxon>Naldaviricetes</taxon>
        <taxon>Lefavirales</taxon>
        <taxon>Baculoviridae</taxon>
        <taxon>Betabaculovirus</taxon>
        <taxon>Betabaculovirus cryleucotretae</taxon>
    </lineage>
</organism>
<sequence length="240" mass="27894">MSFSERPRVTQNGPSMIHLFNVFSKFRKENDYDGLVNYLITNYSQNVKNRTFNFHNTGHIFHMLYAYVPSPSSKERKQIRLDCIENLLESTKNDFKLYEDLIKLMNGDDKCPCELITARLNDNIAYNESLKNKNFDSKPCKLKKEPIDSILFKYSINWKNSLNKKRSLPKSTTTKKSEEKENMDEIEVDASKISSQSSLSNLNGYTIASCVHDYVIEEHQLRAGDEMVSFIKFCKKCGHK</sequence>
<comment type="function">
    <text evidence="1">Required for late and very late gene expression.</text>
</comment>
<comment type="similarity">
    <text evidence="2">Belongs to the baculoviridae LEF-5 family.</text>
</comment>
<comment type="caution">
    <text evidence="2">It is uncertain whether Met-1 is the initiator.</text>
</comment>
<keyword id="KW-1185">Reference proteome</keyword>
<keyword id="KW-0804">Transcription</keyword>
<keyword id="KW-0805">Transcription regulation</keyword>